<sequence>MQGAASHDAAAAAAAAAVLGGGHGVPRWPRMVFLVGAMTCLAISATAHLLACHSRRASVVFWQLDYAGISAMIVASFVPPVYYAFLCHRPARVAYLSAISALGALVVGALLSPPCSSPRFRRLRAALFLAMGLSGVVPALHALWLNWGHAACYLALSLEVAMGLAYAAGAWFYVSRVPEKWRPGVFDVVGHSHQIFHVLVLVGAVTHYVAVDVLLNWRETVAAACSATS</sequence>
<dbReference type="EMBL" id="AP004840">
    <property type="protein sequence ID" value="BAD28011.1"/>
    <property type="molecule type" value="Genomic_DNA"/>
</dbReference>
<dbReference type="EMBL" id="AP008208">
    <property type="protein sequence ID" value="BAF07998.1"/>
    <property type="molecule type" value="Genomic_DNA"/>
</dbReference>
<dbReference type="EMBL" id="AP014958">
    <property type="protein sequence ID" value="BAS77293.1"/>
    <property type="molecule type" value="Genomic_DNA"/>
</dbReference>
<dbReference type="EMBL" id="AK110722">
    <property type="status" value="NOT_ANNOTATED_CDS"/>
    <property type="molecule type" value="mRNA"/>
</dbReference>
<dbReference type="SMR" id="Q6ETK9"/>
<dbReference type="FunCoup" id="Q6ETK9">
    <property type="interactions" value="21"/>
</dbReference>
<dbReference type="STRING" id="39947.Q6ETK9"/>
<dbReference type="PaxDb" id="39947-Q6ETK9"/>
<dbReference type="EnsemblPlants" id="Os02t0179500-01">
    <property type="protein sequence ID" value="Os02t0179500-01"/>
    <property type="gene ID" value="Os02g0179500"/>
</dbReference>
<dbReference type="Gramene" id="Os02t0179500-01">
    <property type="protein sequence ID" value="Os02t0179500-01"/>
    <property type="gene ID" value="Os02g0179500"/>
</dbReference>
<dbReference type="KEGG" id="dosa:Os02g0179500"/>
<dbReference type="eggNOG" id="KOG0748">
    <property type="taxonomic scope" value="Eukaryota"/>
</dbReference>
<dbReference type="HOGENOM" id="CLU_023075_5_0_1"/>
<dbReference type="InParanoid" id="Q6ETK9"/>
<dbReference type="OMA" id="GHFDIWF"/>
<dbReference type="Proteomes" id="UP000000763">
    <property type="component" value="Chromosome 2"/>
</dbReference>
<dbReference type="Proteomes" id="UP000059680">
    <property type="component" value="Chromosome 2"/>
</dbReference>
<dbReference type="GO" id="GO:0016020">
    <property type="term" value="C:membrane"/>
    <property type="evidence" value="ECO:0007669"/>
    <property type="project" value="UniProtKB-SubCell"/>
</dbReference>
<dbReference type="GO" id="GO:0038023">
    <property type="term" value="F:signaling receptor activity"/>
    <property type="evidence" value="ECO:0000318"/>
    <property type="project" value="GO_Central"/>
</dbReference>
<dbReference type="GO" id="GO:0009725">
    <property type="term" value="P:response to hormone"/>
    <property type="evidence" value="ECO:0000318"/>
    <property type="project" value="GO_Central"/>
</dbReference>
<dbReference type="GO" id="GO:0009744">
    <property type="term" value="P:response to sucrose"/>
    <property type="evidence" value="ECO:0007669"/>
    <property type="project" value="UniProtKB-ARBA"/>
</dbReference>
<dbReference type="InterPro" id="IPR004254">
    <property type="entry name" value="AdipoR/HlyIII-related"/>
</dbReference>
<dbReference type="PANTHER" id="PTHR20855">
    <property type="entry name" value="ADIPOR/PROGESTIN RECEPTOR-RELATED"/>
    <property type="match status" value="1"/>
</dbReference>
<dbReference type="PANTHER" id="PTHR20855:SF100">
    <property type="entry name" value="HEPTAHELICAL TRANSMEMBRANE PROTEIN 2"/>
    <property type="match status" value="1"/>
</dbReference>
<dbReference type="Pfam" id="PF03006">
    <property type="entry name" value="HlyIII"/>
    <property type="match status" value="1"/>
</dbReference>
<comment type="function">
    <text evidence="1">May play a role in abiotic stress response.</text>
</comment>
<comment type="subcellular location">
    <subcellularLocation>
        <location evidence="3">Membrane</location>
        <topology evidence="3">Multi-pass membrane protein</topology>
    </subcellularLocation>
</comment>
<comment type="similarity">
    <text evidence="3">Belongs to the ADIPOR family.</text>
</comment>
<gene>
    <name type="primary">ADIPOR2</name>
    <name type="ordered locus">Os02g0179500</name>
    <name type="ordered locus">LOC_Os02g08320</name>
    <name type="ORF">P0544B02.25</name>
</gene>
<proteinExistence type="evidence at transcript level"/>
<organism>
    <name type="scientific">Oryza sativa subsp. japonica</name>
    <name type="common">Rice</name>
    <dbReference type="NCBI Taxonomy" id="39947"/>
    <lineage>
        <taxon>Eukaryota</taxon>
        <taxon>Viridiplantae</taxon>
        <taxon>Streptophyta</taxon>
        <taxon>Embryophyta</taxon>
        <taxon>Tracheophyta</taxon>
        <taxon>Spermatophyta</taxon>
        <taxon>Magnoliopsida</taxon>
        <taxon>Liliopsida</taxon>
        <taxon>Poales</taxon>
        <taxon>Poaceae</taxon>
        <taxon>BOP clade</taxon>
        <taxon>Oryzoideae</taxon>
        <taxon>Oryzeae</taxon>
        <taxon>Oryzinae</taxon>
        <taxon>Oryza</taxon>
        <taxon>Oryza sativa</taxon>
    </lineage>
</organism>
<name>ADPO2_ORYSJ</name>
<feature type="chain" id="PRO_0000430053" description="Heptahelical transmembrane protein ADIPOR2">
    <location>
        <begin position="1"/>
        <end position="229"/>
    </location>
</feature>
<feature type="topological domain" description="Cytoplasmic" evidence="2">
    <location>
        <begin position="1"/>
        <end position="4"/>
    </location>
</feature>
<feature type="transmembrane region" description="Helical" evidence="2">
    <location>
        <begin position="5"/>
        <end position="25"/>
    </location>
</feature>
<feature type="topological domain" description="Extracellular" evidence="2">
    <location>
        <begin position="26"/>
        <end position="30"/>
    </location>
</feature>
<feature type="transmembrane region" description="Helical" evidence="2">
    <location>
        <begin position="31"/>
        <end position="51"/>
    </location>
</feature>
<feature type="topological domain" description="Cytoplasmic" evidence="2">
    <location>
        <begin position="52"/>
        <end position="66"/>
    </location>
</feature>
<feature type="transmembrane region" description="Helical" evidence="2">
    <location>
        <begin position="67"/>
        <end position="87"/>
    </location>
</feature>
<feature type="topological domain" description="Extracellular" evidence="2">
    <location>
        <begin position="88"/>
        <end position="92"/>
    </location>
</feature>
<feature type="transmembrane region" description="Helical" evidence="2">
    <location>
        <begin position="93"/>
        <end position="113"/>
    </location>
</feature>
<feature type="topological domain" description="Cytoplasmic" evidence="2">
    <location>
        <begin position="114"/>
        <end position="124"/>
    </location>
</feature>
<feature type="transmembrane region" description="Helical" evidence="2">
    <location>
        <begin position="125"/>
        <end position="145"/>
    </location>
</feature>
<feature type="topological domain" description="Extracellular" evidence="2">
    <location>
        <begin position="146"/>
        <end position="153"/>
    </location>
</feature>
<feature type="transmembrane region" description="Helical" evidence="2">
    <location>
        <begin position="154"/>
        <end position="174"/>
    </location>
</feature>
<feature type="topological domain" description="Cytoplasmic" evidence="2">
    <location>
        <begin position="175"/>
        <end position="194"/>
    </location>
</feature>
<feature type="transmembrane region" description="Helical" evidence="2">
    <location>
        <begin position="195"/>
        <end position="215"/>
    </location>
</feature>
<feature type="topological domain" description="Extracellular" evidence="2">
    <location>
        <begin position="216"/>
        <end position="229"/>
    </location>
</feature>
<feature type="sequence conflict" description="In Ref. 4; AK110722." evidence="3" ref="4">
    <original>H</original>
    <variation>R</variation>
    <location>
        <position position="88"/>
    </location>
</feature>
<feature type="sequence conflict" description="In Ref. 4; AK110722." evidence="3" ref="4">
    <original>A</original>
    <variation>T</variation>
    <location>
        <position position="94"/>
    </location>
</feature>
<accession>Q6ETK9</accession>
<accession>A0A0P0VFG8</accession>
<evidence type="ECO:0000250" key="1"/>
<evidence type="ECO:0000255" key="2"/>
<evidence type="ECO:0000305" key="3"/>
<keyword id="KW-0472">Membrane</keyword>
<keyword id="KW-1185">Reference proteome</keyword>
<keyword id="KW-0346">Stress response</keyword>
<keyword id="KW-0812">Transmembrane</keyword>
<keyword id="KW-1133">Transmembrane helix</keyword>
<protein>
    <recommendedName>
        <fullName>Heptahelical transmembrane protein ADIPOR2</fullName>
    </recommendedName>
    <alternativeName>
        <fullName>PAQR family protein ADIPOR2</fullName>
    </alternativeName>
</protein>
<reference key="1">
    <citation type="journal article" date="2005" name="Nature">
        <title>The map-based sequence of the rice genome.</title>
        <authorList>
            <consortium name="International rice genome sequencing project (IRGSP)"/>
        </authorList>
    </citation>
    <scope>NUCLEOTIDE SEQUENCE [LARGE SCALE GENOMIC DNA]</scope>
    <source>
        <strain>cv. Nipponbare</strain>
    </source>
</reference>
<reference key="2">
    <citation type="journal article" date="2008" name="Nucleic Acids Res.">
        <title>The rice annotation project database (RAP-DB): 2008 update.</title>
        <authorList>
            <consortium name="The rice annotation project (RAP)"/>
        </authorList>
    </citation>
    <scope>GENOME REANNOTATION</scope>
    <source>
        <strain>cv. Nipponbare</strain>
    </source>
</reference>
<reference key="3">
    <citation type="journal article" date="2013" name="Rice">
        <title>Improvement of the Oryza sativa Nipponbare reference genome using next generation sequence and optical map data.</title>
        <authorList>
            <person name="Kawahara Y."/>
            <person name="de la Bastide M."/>
            <person name="Hamilton J.P."/>
            <person name="Kanamori H."/>
            <person name="McCombie W.R."/>
            <person name="Ouyang S."/>
            <person name="Schwartz D.C."/>
            <person name="Tanaka T."/>
            <person name="Wu J."/>
            <person name="Zhou S."/>
            <person name="Childs K.L."/>
            <person name="Davidson R.M."/>
            <person name="Lin H."/>
            <person name="Quesada-Ocampo L."/>
            <person name="Vaillancourt B."/>
            <person name="Sakai H."/>
            <person name="Lee S.S."/>
            <person name="Kim J."/>
            <person name="Numa H."/>
            <person name="Itoh T."/>
            <person name="Buell C.R."/>
            <person name="Matsumoto T."/>
        </authorList>
    </citation>
    <scope>GENOME REANNOTATION</scope>
    <source>
        <strain>cv. Nipponbare</strain>
    </source>
</reference>
<reference key="4">
    <citation type="journal article" date="2003" name="Science">
        <title>Collection, mapping, and annotation of over 28,000 cDNA clones from japonica rice.</title>
        <authorList>
            <consortium name="The rice full-length cDNA consortium"/>
        </authorList>
    </citation>
    <scope>NUCLEOTIDE SEQUENCE [LARGE SCALE MRNA]</scope>
    <source>
        <strain>cv. Nipponbare</strain>
    </source>
</reference>
<reference key="5">
    <citation type="journal article" date="2005" name="J. Exp. Bot.">
        <title>A novel gene family in Arabidopsis encoding putative heptahelical transmembrane proteins homologous to human adiponectin receptors and progestin receptors.</title>
        <authorList>
            <person name="Hsieh M.H."/>
            <person name="Goodman H.M."/>
        </authorList>
    </citation>
    <scope>GENE FAMILY</scope>
</reference>